<sequence>MDHLPMPKFGPLAGLRVVFSGIEIAGPFAGQMFAEWGAEVIWIENVAWADTIRVQPNYPQLSRRNLHALSLNIFKDEGREAFLKLMETTDIFIEASKGPAFARRGITDEVLWQHNPKLVIAHLSGFGQYGTEEYTNLPAYNTIAQAFSGYLIQNGDVDQPMPAFPYTADYFSGLTATTAALAALHKVRETGKGESIDIAMYEVMLRMGQYFMMDYFNGGEMCPRMSKGKDPYYAGCGLYKCADGYIVMELVGITQIEECFKDIGLAHLLSTPEIPEGTQLIHRIECPYGPLVEEKLDAWLAAHTIAEVKERFAELNIACAKVLTVPELESNPQYVARESITQWQTMDGRTCKGPNIMPKFKNNPGQIWRGMPSHGMDTAAILKNIGYSENDIQELVSKGLAKVED</sequence>
<name>CAIB_ECOSE</name>
<protein>
    <recommendedName>
        <fullName evidence="1">L-carnitine CoA-transferase</fullName>
        <ecNumber evidence="1">2.8.3.21</ecNumber>
    </recommendedName>
    <alternativeName>
        <fullName evidence="1">Crotonobetainyl-CoA:carnitine CoA-transferase</fullName>
    </alternativeName>
</protein>
<feature type="chain" id="PRO_1000136251" description="L-carnitine CoA-transferase">
    <location>
        <begin position="1"/>
        <end position="405"/>
    </location>
</feature>
<feature type="active site" description="Nucleophile" evidence="1">
    <location>
        <position position="169"/>
    </location>
</feature>
<feature type="binding site" evidence="1">
    <location>
        <position position="97"/>
    </location>
    <ligand>
        <name>CoA</name>
        <dbReference type="ChEBI" id="CHEBI:57287"/>
    </ligand>
</feature>
<feature type="binding site" evidence="1">
    <location>
        <position position="104"/>
    </location>
    <ligand>
        <name>CoA</name>
        <dbReference type="ChEBI" id="CHEBI:57287"/>
    </ligand>
</feature>
<reference key="1">
    <citation type="journal article" date="2008" name="DNA Res.">
        <title>Complete genome sequence and comparative analysis of the wild-type commensal Escherichia coli strain SE11 isolated from a healthy adult.</title>
        <authorList>
            <person name="Oshima K."/>
            <person name="Toh H."/>
            <person name="Ogura Y."/>
            <person name="Sasamoto H."/>
            <person name="Morita H."/>
            <person name="Park S.-H."/>
            <person name="Ooka T."/>
            <person name="Iyoda S."/>
            <person name="Taylor T.D."/>
            <person name="Hayashi T."/>
            <person name="Itoh K."/>
            <person name="Hattori M."/>
        </authorList>
    </citation>
    <scope>NUCLEOTIDE SEQUENCE [LARGE SCALE GENOMIC DNA]</scope>
    <source>
        <strain>SE11</strain>
    </source>
</reference>
<evidence type="ECO:0000255" key="1">
    <source>
        <dbReference type="HAMAP-Rule" id="MF_01050"/>
    </source>
</evidence>
<dbReference type="EC" id="2.8.3.21" evidence="1"/>
<dbReference type="EMBL" id="AP009240">
    <property type="protein sequence ID" value="BAG75563.1"/>
    <property type="molecule type" value="Genomic_DNA"/>
</dbReference>
<dbReference type="RefSeq" id="WP_000349938.1">
    <property type="nucleotide sequence ID" value="NC_011415.1"/>
</dbReference>
<dbReference type="SMR" id="B6HYY9"/>
<dbReference type="GeneID" id="75203965"/>
<dbReference type="KEGG" id="ecy:ECSE_0039"/>
<dbReference type="HOGENOM" id="CLU_033975_2_0_6"/>
<dbReference type="UniPathway" id="UPA00117"/>
<dbReference type="Proteomes" id="UP000008199">
    <property type="component" value="Chromosome"/>
</dbReference>
<dbReference type="GO" id="GO:0005737">
    <property type="term" value="C:cytoplasm"/>
    <property type="evidence" value="ECO:0007669"/>
    <property type="project" value="UniProtKB-SubCell"/>
</dbReference>
<dbReference type="GO" id="GO:0008735">
    <property type="term" value="F:L-carnitine CoA-transferase activity"/>
    <property type="evidence" value="ECO:0007669"/>
    <property type="project" value="RHEA"/>
</dbReference>
<dbReference type="GO" id="GO:0009437">
    <property type="term" value="P:carnitine metabolic process"/>
    <property type="evidence" value="ECO:0007669"/>
    <property type="project" value="UniProtKB-UniRule"/>
</dbReference>
<dbReference type="FunFam" id="3.30.1540.10:FF:000001">
    <property type="entry name" value="L-carnitine CoA-transferase"/>
    <property type="match status" value="1"/>
</dbReference>
<dbReference type="Gene3D" id="3.40.50.10540">
    <property type="entry name" value="Crotonobetainyl-coa:carnitine coa-transferase, domain 1"/>
    <property type="match status" value="1"/>
</dbReference>
<dbReference type="Gene3D" id="3.30.1540.10">
    <property type="entry name" value="formyl-coa transferase, domain 3"/>
    <property type="match status" value="1"/>
</dbReference>
<dbReference type="HAMAP" id="MF_01050">
    <property type="entry name" value="CaiB"/>
    <property type="match status" value="1"/>
</dbReference>
<dbReference type="InterPro" id="IPR050509">
    <property type="entry name" value="CoA-transferase_III"/>
</dbReference>
<dbReference type="InterPro" id="IPR023452">
    <property type="entry name" value="CoA-Trfase_CaiB"/>
</dbReference>
<dbReference type="InterPro" id="IPR003673">
    <property type="entry name" value="CoA-Trfase_fam_III"/>
</dbReference>
<dbReference type="InterPro" id="IPR044855">
    <property type="entry name" value="CoA-Trfase_III_dom3_sf"/>
</dbReference>
<dbReference type="InterPro" id="IPR023606">
    <property type="entry name" value="CoA-Trfase_III_dom_1_sf"/>
</dbReference>
<dbReference type="NCBIfam" id="NF002914">
    <property type="entry name" value="PRK03525.1"/>
    <property type="match status" value="1"/>
</dbReference>
<dbReference type="PANTHER" id="PTHR48228:SF6">
    <property type="entry name" value="L-CARNITINE COA-TRANSFERASE"/>
    <property type="match status" value="1"/>
</dbReference>
<dbReference type="PANTHER" id="PTHR48228">
    <property type="entry name" value="SUCCINYL-COA--D-CITRAMALATE COA-TRANSFERASE"/>
    <property type="match status" value="1"/>
</dbReference>
<dbReference type="Pfam" id="PF02515">
    <property type="entry name" value="CoA_transf_3"/>
    <property type="match status" value="1"/>
</dbReference>
<dbReference type="SUPFAM" id="SSF89796">
    <property type="entry name" value="CoA-transferase family III (CaiB/BaiF)"/>
    <property type="match status" value="1"/>
</dbReference>
<organism>
    <name type="scientific">Escherichia coli (strain SE11)</name>
    <dbReference type="NCBI Taxonomy" id="409438"/>
    <lineage>
        <taxon>Bacteria</taxon>
        <taxon>Pseudomonadati</taxon>
        <taxon>Pseudomonadota</taxon>
        <taxon>Gammaproteobacteria</taxon>
        <taxon>Enterobacterales</taxon>
        <taxon>Enterobacteriaceae</taxon>
        <taxon>Escherichia</taxon>
    </lineage>
</organism>
<comment type="function">
    <text evidence="1">Catalyzes the reversible transfer of the CoA moiety from gamma-butyrobetainyl-CoA to L-carnitine to generate L-carnitinyl-CoA and gamma-butyrobetaine. Is also able to catalyze the reversible transfer of the CoA moiety from gamma-butyrobetainyl-CoA or L-carnitinyl-CoA to crotonobetaine to generate crotonobetainyl-CoA.</text>
</comment>
<comment type="catalytic activity">
    <reaction evidence="1">
        <text>crotonobetainyl-CoA + (R)-carnitine = crotonobetaine + (R)-carnitinyl-CoA</text>
        <dbReference type="Rhea" id="RHEA:28526"/>
        <dbReference type="ChEBI" id="CHEBI:16347"/>
        <dbReference type="ChEBI" id="CHEBI:17237"/>
        <dbReference type="ChEBI" id="CHEBI:60932"/>
        <dbReference type="ChEBI" id="CHEBI:60933"/>
        <dbReference type="EC" id="2.8.3.21"/>
    </reaction>
</comment>
<comment type="catalytic activity">
    <reaction evidence="1">
        <text>4-(trimethylamino)butanoyl-CoA + (R)-carnitine = (R)-carnitinyl-CoA + 4-(trimethylamino)butanoate</text>
        <dbReference type="Rhea" id="RHEA:28418"/>
        <dbReference type="ChEBI" id="CHEBI:16244"/>
        <dbReference type="ChEBI" id="CHEBI:16347"/>
        <dbReference type="ChEBI" id="CHEBI:60932"/>
        <dbReference type="ChEBI" id="CHEBI:61513"/>
        <dbReference type="EC" id="2.8.3.21"/>
    </reaction>
</comment>
<comment type="pathway">
    <text evidence="1">Amine and polyamine metabolism; carnitine metabolism.</text>
</comment>
<comment type="subunit">
    <text evidence="1">Homodimer.</text>
</comment>
<comment type="subcellular location">
    <subcellularLocation>
        <location evidence="1">Cytoplasm</location>
    </subcellularLocation>
</comment>
<comment type="similarity">
    <text evidence="1">Belongs to the CoA-transferase III family. CaiB subfamily.</text>
</comment>
<keyword id="KW-0963">Cytoplasm</keyword>
<keyword id="KW-0808">Transferase</keyword>
<proteinExistence type="inferred from homology"/>
<accession>B6HYY9</accession>
<gene>
    <name evidence="1" type="primary">caiB</name>
    <name type="ordered locus">ECSE_0039</name>
</gene>